<organism>
    <name type="scientific">Campylobacter jejuni subsp. jejuni serotype O:6 (strain 81116 / NCTC 11828)</name>
    <dbReference type="NCBI Taxonomy" id="407148"/>
    <lineage>
        <taxon>Bacteria</taxon>
        <taxon>Pseudomonadati</taxon>
        <taxon>Campylobacterota</taxon>
        <taxon>Epsilonproteobacteria</taxon>
        <taxon>Campylobacterales</taxon>
        <taxon>Campylobacteraceae</taxon>
        <taxon>Campylobacter</taxon>
    </lineage>
</organism>
<proteinExistence type="inferred from homology"/>
<name>ATPL_CAMJ8</name>
<feature type="chain" id="PRO_0000365862" description="ATP synthase subunit c">
    <location>
        <begin position="1"/>
        <end position="112"/>
    </location>
</feature>
<feature type="transmembrane region" description="Helical" evidence="1">
    <location>
        <begin position="36"/>
        <end position="56"/>
    </location>
</feature>
<feature type="transmembrane region" description="Helical" evidence="1">
    <location>
        <begin position="81"/>
        <end position="101"/>
    </location>
</feature>
<feature type="site" description="Reversibly protonated during proton transport" evidence="1">
    <location>
        <position position="89"/>
    </location>
</feature>
<comment type="function">
    <text evidence="1">F(1)F(0) ATP synthase produces ATP from ADP in the presence of a proton or sodium gradient. F-type ATPases consist of two structural domains, F(1) containing the extramembraneous catalytic core and F(0) containing the membrane proton channel, linked together by a central stalk and a peripheral stalk. During catalysis, ATP synthesis in the catalytic domain of F(1) is coupled via a rotary mechanism of the central stalk subunits to proton translocation.</text>
</comment>
<comment type="function">
    <text evidence="1">Key component of the F(0) channel; it plays a direct role in translocation across the membrane. A homomeric c-ring of between 10-14 subunits forms the central stalk rotor element with the F(1) delta and epsilon subunits.</text>
</comment>
<comment type="subunit">
    <text evidence="1">F-type ATPases have 2 components, F(1) - the catalytic core - and F(0) - the membrane proton channel. F(1) has five subunits: alpha(3), beta(3), gamma(1), delta(1), epsilon(1). F(0) has three main subunits: a(1), b(2) and c(10-14). The alpha and beta chains form an alternating ring which encloses part of the gamma chain. F(1) is attached to F(0) by a central stalk formed by the gamma and epsilon chains, while a peripheral stalk is formed by the delta and b chains.</text>
</comment>
<comment type="subcellular location">
    <subcellularLocation>
        <location evidence="1">Cell inner membrane</location>
        <topology evidence="1">Multi-pass membrane protein</topology>
    </subcellularLocation>
</comment>
<comment type="similarity">
    <text evidence="1">Belongs to the ATPase C chain family.</text>
</comment>
<dbReference type="EMBL" id="CP000814">
    <property type="protein sequence ID" value="ABV52472.1"/>
    <property type="molecule type" value="Genomic_DNA"/>
</dbReference>
<dbReference type="RefSeq" id="WP_002853683.1">
    <property type="nucleotide sequence ID" value="NC_009839.1"/>
</dbReference>
<dbReference type="SMR" id="A8FLY5"/>
<dbReference type="KEGG" id="cju:C8J_0873"/>
<dbReference type="HOGENOM" id="CLU_148047_0_1_7"/>
<dbReference type="GO" id="GO:0005886">
    <property type="term" value="C:plasma membrane"/>
    <property type="evidence" value="ECO:0007669"/>
    <property type="project" value="UniProtKB-SubCell"/>
</dbReference>
<dbReference type="GO" id="GO:0045259">
    <property type="term" value="C:proton-transporting ATP synthase complex"/>
    <property type="evidence" value="ECO:0007669"/>
    <property type="project" value="UniProtKB-KW"/>
</dbReference>
<dbReference type="GO" id="GO:0033177">
    <property type="term" value="C:proton-transporting two-sector ATPase complex, proton-transporting domain"/>
    <property type="evidence" value="ECO:0007669"/>
    <property type="project" value="InterPro"/>
</dbReference>
<dbReference type="GO" id="GO:0008289">
    <property type="term" value="F:lipid binding"/>
    <property type="evidence" value="ECO:0007669"/>
    <property type="project" value="UniProtKB-KW"/>
</dbReference>
<dbReference type="GO" id="GO:0046933">
    <property type="term" value="F:proton-transporting ATP synthase activity, rotational mechanism"/>
    <property type="evidence" value="ECO:0007669"/>
    <property type="project" value="UniProtKB-UniRule"/>
</dbReference>
<dbReference type="CDD" id="cd18121">
    <property type="entry name" value="ATP-synt_Fo_c"/>
    <property type="match status" value="1"/>
</dbReference>
<dbReference type="FunFam" id="1.20.20.10:FF:000002">
    <property type="entry name" value="ATP synthase subunit c"/>
    <property type="match status" value="1"/>
</dbReference>
<dbReference type="Gene3D" id="1.20.20.10">
    <property type="entry name" value="F1F0 ATP synthase subunit C"/>
    <property type="match status" value="1"/>
</dbReference>
<dbReference type="HAMAP" id="MF_01396">
    <property type="entry name" value="ATP_synth_c_bact"/>
    <property type="match status" value="1"/>
</dbReference>
<dbReference type="InterPro" id="IPR005953">
    <property type="entry name" value="ATP_synth_csu_bac/chlpt"/>
</dbReference>
<dbReference type="InterPro" id="IPR000454">
    <property type="entry name" value="ATP_synth_F0_csu"/>
</dbReference>
<dbReference type="InterPro" id="IPR020537">
    <property type="entry name" value="ATP_synth_F0_csu_DDCD_BS"/>
</dbReference>
<dbReference type="InterPro" id="IPR038662">
    <property type="entry name" value="ATP_synth_F0_csu_sf"/>
</dbReference>
<dbReference type="InterPro" id="IPR002379">
    <property type="entry name" value="ATPase_proteolipid_c-like_dom"/>
</dbReference>
<dbReference type="InterPro" id="IPR035921">
    <property type="entry name" value="F/V-ATP_Csub_sf"/>
</dbReference>
<dbReference type="NCBIfam" id="TIGR01260">
    <property type="entry name" value="ATP_synt_c"/>
    <property type="match status" value="1"/>
</dbReference>
<dbReference type="NCBIfam" id="NF006295">
    <property type="entry name" value="PRK08482.1"/>
    <property type="match status" value="1"/>
</dbReference>
<dbReference type="Pfam" id="PF00137">
    <property type="entry name" value="ATP-synt_C"/>
    <property type="match status" value="1"/>
</dbReference>
<dbReference type="PRINTS" id="PR00124">
    <property type="entry name" value="ATPASEC"/>
</dbReference>
<dbReference type="SUPFAM" id="SSF81333">
    <property type="entry name" value="F1F0 ATP synthase subunit C"/>
    <property type="match status" value="1"/>
</dbReference>
<dbReference type="PROSITE" id="PS00605">
    <property type="entry name" value="ATPASE_C"/>
    <property type="match status" value="1"/>
</dbReference>
<sequence length="112" mass="11388">MKKVLFLLLACAAVAFAAETNAPVEQEAINVWIKAFSVLAAGLGLGVAALGGAIGMGNTAAATIAGTARNPGLGPKLMTTMFIALAMIEAQVIYALVIALIALYANPFIVLQ</sequence>
<accession>A8FLY5</accession>
<protein>
    <recommendedName>
        <fullName evidence="1">ATP synthase subunit c</fullName>
    </recommendedName>
    <alternativeName>
        <fullName evidence="1">ATP synthase F(0) sector subunit c</fullName>
    </alternativeName>
    <alternativeName>
        <fullName evidence="1">F-type ATPase subunit c</fullName>
        <shortName evidence="1">F-ATPase subunit c</shortName>
    </alternativeName>
    <alternativeName>
        <fullName evidence="1">Lipid-binding protein</fullName>
    </alternativeName>
</protein>
<evidence type="ECO:0000255" key="1">
    <source>
        <dbReference type="HAMAP-Rule" id="MF_01396"/>
    </source>
</evidence>
<reference key="1">
    <citation type="journal article" date="2007" name="J. Bacteriol.">
        <title>The complete genome sequence of Campylobacter jejuni strain 81116 (NCTC11828).</title>
        <authorList>
            <person name="Pearson B.M."/>
            <person name="Gaskin D.J.H."/>
            <person name="Segers R.P.A.M."/>
            <person name="Wells J.M."/>
            <person name="Nuijten P.J.M."/>
            <person name="van Vliet A.H.M."/>
        </authorList>
    </citation>
    <scope>NUCLEOTIDE SEQUENCE [LARGE SCALE GENOMIC DNA]</scope>
    <source>
        <strain>81116 / NCTC 11828</strain>
    </source>
</reference>
<keyword id="KW-0066">ATP synthesis</keyword>
<keyword id="KW-0997">Cell inner membrane</keyword>
<keyword id="KW-1003">Cell membrane</keyword>
<keyword id="KW-0138">CF(0)</keyword>
<keyword id="KW-0375">Hydrogen ion transport</keyword>
<keyword id="KW-0406">Ion transport</keyword>
<keyword id="KW-0446">Lipid-binding</keyword>
<keyword id="KW-0472">Membrane</keyword>
<keyword id="KW-0812">Transmembrane</keyword>
<keyword id="KW-1133">Transmembrane helix</keyword>
<keyword id="KW-0813">Transport</keyword>
<gene>
    <name evidence="1" type="primary">atpE</name>
    <name type="ordered locus">C8J_0873</name>
</gene>